<comment type="function">
    <text evidence="1">Binds to the 23S rRNA.</text>
</comment>
<comment type="subunit">
    <text evidence="1 3">Part of the 50S ribosomal subunit.</text>
</comment>
<comment type="similarity">
    <text evidence="1">Belongs to the universal ribosomal protein uL15 family.</text>
</comment>
<proteinExistence type="evidence at protein level"/>
<dbReference type="EMBL" id="AP006878">
    <property type="protein sequence ID" value="BAD85708.1"/>
    <property type="molecule type" value="Genomic_DNA"/>
</dbReference>
<dbReference type="RefSeq" id="WP_011250470.1">
    <property type="nucleotide sequence ID" value="NC_006624.1"/>
</dbReference>
<dbReference type="PDB" id="6SKF">
    <property type="method" value="EM"/>
    <property type="resolution" value="2.95 A"/>
    <property type="chains" value="BO=1-148"/>
</dbReference>
<dbReference type="PDB" id="6SKG">
    <property type="method" value="EM"/>
    <property type="resolution" value="2.65 A"/>
    <property type="chains" value="BO=1-148"/>
</dbReference>
<dbReference type="PDB" id="6TH6">
    <property type="method" value="EM"/>
    <property type="resolution" value="2.55 A"/>
    <property type="chains" value="BO=1-148"/>
</dbReference>
<dbReference type="PDBsum" id="6SKF"/>
<dbReference type="PDBsum" id="6SKG"/>
<dbReference type="PDBsum" id="6TH6"/>
<dbReference type="EMDB" id="EMD-10223"/>
<dbReference type="EMDB" id="EMD-10224"/>
<dbReference type="EMDB" id="EMD-10503"/>
<dbReference type="SMR" id="Q5JJH0"/>
<dbReference type="FunCoup" id="Q5JJH0">
    <property type="interactions" value="147"/>
</dbReference>
<dbReference type="STRING" id="69014.TK1519"/>
<dbReference type="EnsemblBacteria" id="BAD85708">
    <property type="protein sequence ID" value="BAD85708"/>
    <property type="gene ID" value="TK1519"/>
</dbReference>
<dbReference type="GeneID" id="78448047"/>
<dbReference type="KEGG" id="tko:TK1519"/>
<dbReference type="PATRIC" id="fig|69014.16.peg.1479"/>
<dbReference type="eggNOG" id="arCOG00779">
    <property type="taxonomic scope" value="Archaea"/>
</dbReference>
<dbReference type="HOGENOM" id="CLU_109163_0_0_2"/>
<dbReference type="InParanoid" id="Q5JJH0"/>
<dbReference type="OrthoDB" id="9418at2157"/>
<dbReference type="PhylomeDB" id="Q5JJH0"/>
<dbReference type="Proteomes" id="UP000000536">
    <property type="component" value="Chromosome"/>
</dbReference>
<dbReference type="GO" id="GO:0022625">
    <property type="term" value="C:cytosolic large ribosomal subunit"/>
    <property type="evidence" value="ECO:0000318"/>
    <property type="project" value="GO_Central"/>
</dbReference>
<dbReference type="GO" id="GO:0019843">
    <property type="term" value="F:rRNA binding"/>
    <property type="evidence" value="ECO:0007669"/>
    <property type="project" value="UniProtKB-UniRule"/>
</dbReference>
<dbReference type="GO" id="GO:0003735">
    <property type="term" value="F:structural constituent of ribosome"/>
    <property type="evidence" value="ECO:0000318"/>
    <property type="project" value="GO_Central"/>
</dbReference>
<dbReference type="GO" id="GO:0006412">
    <property type="term" value="P:translation"/>
    <property type="evidence" value="ECO:0007669"/>
    <property type="project" value="UniProtKB-UniRule"/>
</dbReference>
<dbReference type="Gene3D" id="3.100.10.10">
    <property type="match status" value="1"/>
</dbReference>
<dbReference type="Gene3D" id="4.10.990.10">
    <property type="match status" value="1"/>
</dbReference>
<dbReference type="HAMAP" id="MF_01341">
    <property type="entry name" value="Ribosomal_uL15"/>
    <property type="match status" value="1"/>
</dbReference>
<dbReference type="InterPro" id="IPR027386">
    <property type="entry name" value="Rbsml_uL15_N"/>
</dbReference>
<dbReference type="InterPro" id="IPR030878">
    <property type="entry name" value="Ribosomal_uL15"/>
</dbReference>
<dbReference type="InterPro" id="IPR021131">
    <property type="entry name" value="Ribosomal_uL15/eL18"/>
</dbReference>
<dbReference type="InterPro" id="IPR036227">
    <property type="entry name" value="Ribosomal_uL15/eL18_sf"/>
</dbReference>
<dbReference type="InterPro" id="IPR001196">
    <property type="entry name" value="Ribosomal_uL15_CS"/>
</dbReference>
<dbReference type="PANTHER" id="PTHR11721">
    <property type="entry name" value="60S RIBOSOMAL PROTEIN L27A"/>
    <property type="match status" value="1"/>
</dbReference>
<dbReference type="PANTHER" id="PTHR11721:SF3">
    <property type="entry name" value="LARGE RIBOSOMAL SUBUNIT PROTEIN UL15"/>
    <property type="match status" value="1"/>
</dbReference>
<dbReference type="Pfam" id="PF00828">
    <property type="entry name" value="Ribosomal_L27A"/>
    <property type="match status" value="1"/>
</dbReference>
<dbReference type="SUPFAM" id="SSF52080">
    <property type="entry name" value="Ribosomal proteins L15p and L18e"/>
    <property type="match status" value="1"/>
</dbReference>
<dbReference type="PROSITE" id="PS00475">
    <property type="entry name" value="RIBOSOMAL_L15"/>
    <property type="match status" value="1"/>
</dbReference>
<gene>
    <name evidence="1" type="primary">rpl15</name>
    <name type="ordered locus">TK1519</name>
</gene>
<reference key="1">
    <citation type="journal article" date="2005" name="Genome Res.">
        <title>Complete genome sequence of the hyperthermophilic archaeon Thermococcus kodakaraensis KOD1 and comparison with Pyrococcus genomes.</title>
        <authorList>
            <person name="Fukui T."/>
            <person name="Atomi H."/>
            <person name="Kanai T."/>
            <person name="Matsumi R."/>
            <person name="Fujiwara S."/>
            <person name="Imanaka T."/>
        </authorList>
    </citation>
    <scope>NUCLEOTIDE SEQUENCE [LARGE SCALE GENOMIC DNA]</scope>
    <source>
        <strain>ATCC BAA-918 / JCM 12380 / KOD1</strain>
    </source>
</reference>
<reference evidence="5 6 7" key="2">
    <citation type="journal article" date="2020" name="Nature">
        <title>Dynamic RNA acetylation revealed by quantitative cross-evolutionary mapping.</title>
        <authorList>
            <person name="Sas-Chen A."/>
            <person name="Thomas J.M."/>
            <person name="Matzov D."/>
            <person name="Taoka M."/>
            <person name="Nance K.D."/>
            <person name="Nir R."/>
            <person name="Bryson K.M."/>
            <person name="Shachar R."/>
            <person name="Liman G.L.S."/>
            <person name="Burkhart B.W."/>
            <person name="Gamage S.T."/>
            <person name="Nobe Y."/>
            <person name="Briney C.A."/>
            <person name="Levy M.J."/>
            <person name="Fuchs R.T."/>
            <person name="Robb G.B."/>
            <person name="Hartmann J."/>
            <person name="Sharma S."/>
            <person name="Lin Q."/>
            <person name="Florens L."/>
            <person name="Washburn M.P."/>
            <person name="Isobe T."/>
            <person name="Santangelo T.J."/>
            <person name="Shalev-Benami M."/>
            <person name="Meier J.L."/>
            <person name="Schwartz S."/>
        </authorList>
    </citation>
    <scope>STRUCTURE BY ELECTRON MICROSCOPY (2.55 ANGSTROMS) IN 70S RIBOSOME</scope>
    <scope>SUBUNIT</scope>
    <source>
        <strain>ATCC BAA-918 / TS559</strain>
    </source>
</reference>
<name>RL15_THEKO</name>
<feature type="chain" id="PRO_0000104873" description="Large ribosomal subunit protein uL15">
    <location>
        <begin position="1"/>
        <end position="148"/>
    </location>
</feature>
<feature type="region of interest" description="Disordered" evidence="2">
    <location>
        <begin position="1"/>
        <end position="43"/>
    </location>
</feature>
<feature type="compositionally biased region" description="Basic residues" evidence="2">
    <location>
        <begin position="1"/>
        <end position="28"/>
    </location>
</feature>
<feature type="compositionally biased region" description="Gly residues" evidence="2">
    <location>
        <begin position="29"/>
        <end position="38"/>
    </location>
</feature>
<keyword id="KW-0002">3D-structure</keyword>
<keyword id="KW-1185">Reference proteome</keyword>
<keyword id="KW-0687">Ribonucleoprotein</keyword>
<keyword id="KW-0689">Ribosomal protein</keyword>
<keyword id="KW-0694">RNA-binding</keyword>
<keyword id="KW-0699">rRNA-binding</keyword>
<protein>
    <recommendedName>
        <fullName evidence="1">Large ribosomal subunit protein uL15</fullName>
    </recommendedName>
    <alternativeName>
        <fullName evidence="4">50S ribosomal protein L15</fullName>
    </alternativeName>
</protein>
<accession>Q5JJH0</accession>
<organism>
    <name type="scientific">Thermococcus kodakarensis (strain ATCC BAA-918 / JCM 12380 / KOD1)</name>
    <name type="common">Pyrococcus kodakaraensis (strain KOD1)</name>
    <dbReference type="NCBI Taxonomy" id="69014"/>
    <lineage>
        <taxon>Archaea</taxon>
        <taxon>Methanobacteriati</taxon>
        <taxon>Methanobacteriota</taxon>
        <taxon>Thermococci</taxon>
        <taxon>Thermococcales</taxon>
        <taxon>Thermococcaceae</taxon>
        <taxon>Thermococcus</taxon>
    </lineage>
</organism>
<sequence>MIRRRKKVRKLRGSHTHGWGCKKKHRGGGSKGGRGMAGTGKRKDQKWTWTIKYAPDRLGKRGFHRPKAVQYIPKVINLNDIDENFELFKDAGIIYEEDGKLVFDATALGVDKILGTGKLTRALVVKAYYVTPKAEEKIKAAGGEVLLA</sequence>
<evidence type="ECO:0000255" key="1">
    <source>
        <dbReference type="HAMAP-Rule" id="MF_01341"/>
    </source>
</evidence>
<evidence type="ECO:0000256" key="2">
    <source>
        <dbReference type="SAM" id="MobiDB-lite"/>
    </source>
</evidence>
<evidence type="ECO:0000269" key="3">
    <source>
    </source>
</evidence>
<evidence type="ECO:0000305" key="4"/>
<evidence type="ECO:0007744" key="5">
    <source>
        <dbReference type="PDB" id="6SKF"/>
    </source>
</evidence>
<evidence type="ECO:0007744" key="6">
    <source>
        <dbReference type="PDB" id="6SKG"/>
    </source>
</evidence>
<evidence type="ECO:0007744" key="7">
    <source>
        <dbReference type="PDB" id="6TH6"/>
    </source>
</evidence>